<protein>
    <recommendedName>
        <fullName evidence="1">Urease accessory protein UreE</fullName>
    </recommendedName>
</protein>
<organism>
    <name type="scientific">Arthrobacter sp. (strain FB24)</name>
    <dbReference type="NCBI Taxonomy" id="290399"/>
    <lineage>
        <taxon>Bacteria</taxon>
        <taxon>Bacillati</taxon>
        <taxon>Actinomycetota</taxon>
        <taxon>Actinomycetes</taxon>
        <taxon>Micrococcales</taxon>
        <taxon>Micrococcaceae</taxon>
        <taxon>Arthrobacter</taxon>
    </lineage>
</organism>
<accession>A0JRH5</accession>
<evidence type="ECO:0000255" key="1">
    <source>
        <dbReference type="HAMAP-Rule" id="MF_00822"/>
    </source>
</evidence>
<dbReference type="EMBL" id="CP000454">
    <property type="protein sequence ID" value="ABK01645.1"/>
    <property type="molecule type" value="Genomic_DNA"/>
</dbReference>
<dbReference type="RefSeq" id="WP_011690115.1">
    <property type="nucleotide sequence ID" value="NC_008541.1"/>
</dbReference>
<dbReference type="SMR" id="A0JRH5"/>
<dbReference type="STRING" id="290399.Arth_0244"/>
<dbReference type="KEGG" id="art:Arth_0244"/>
<dbReference type="eggNOG" id="COG2371">
    <property type="taxonomic scope" value="Bacteria"/>
</dbReference>
<dbReference type="HOGENOM" id="CLU_093757_3_1_11"/>
<dbReference type="OrthoDB" id="9810882at2"/>
<dbReference type="Proteomes" id="UP000000754">
    <property type="component" value="Chromosome"/>
</dbReference>
<dbReference type="GO" id="GO:0005737">
    <property type="term" value="C:cytoplasm"/>
    <property type="evidence" value="ECO:0007669"/>
    <property type="project" value="UniProtKB-SubCell"/>
</dbReference>
<dbReference type="GO" id="GO:0016151">
    <property type="term" value="F:nickel cation binding"/>
    <property type="evidence" value="ECO:0007669"/>
    <property type="project" value="UniProtKB-UniRule"/>
</dbReference>
<dbReference type="GO" id="GO:0051082">
    <property type="term" value="F:unfolded protein binding"/>
    <property type="evidence" value="ECO:0007669"/>
    <property type="project" value="UniProtKB-UniRule"/>
</dbReference>
<dbReference type="GO" id="GO:0006457">
    <property type="term" value="P:protein folding"/>
    <property type="evidence" value="ECO:0007669"/>
    <property type="project" value="InterPro"/>
</dbReference>
<dbReference type="GO" id="GO:0065003">
    <property type="term" value="P:protein-containing complex assembly"/>
    <property type="evidence" value="ECO:0007669"/>
    <property type="project" value="InterPro"/>
</dbReference>
<dbReference type="GO" id="GO:0019627">
    <property type="term" value="P:urea metabolic process"/>
    <property type="evidence" value="ECO:0007669"/>
    <property type="project" value="InterPro"/>
</dbReference>
<dbReference type="CDD" id="cd00571">
    <property type="entry name" value="UreE"/>
    <property type="match status" value="1"/>
</dbReference>
<dbReference type="Gene3D" id="2.60.260.20">
    <property type="entry name" value="Urease metallochaperone UreE, N-terminal domain"/>
    <property type="match status" value="1"/>
</dbReference>
<dbReference type="Gene3D" id="3.30.70.790">
    <property type="entry name" value="UreE, C-terminal domain"/>
    <property type="match status" value="1"/>
</dbReference>
<dbReference type="HAMAP" id="MF_00822">
    <property type="entry name" value="UreE"/>
    <property type="match status" value="1"/>
</dbReference>
<dbReference type="InterPro" id="IPR012406">
    <property type="entry name" value="UreE"/>
</dbReference>
<dbReference type="InterPro" id="IPR007864">
    <property type="entry name" value="UreE_C_dom"/>
</dbReference>
<dbReference type="InterPro" id="IPR004029">
    <property type="entry name" value="UreE_N"/>
</dbReference>
<dbReference type="InterPro" id="IPR036118">
    <property type="entry name" value="UreE_N_sf"/>
</dbReference>
<dbReference type="NCBIfam" id="NF009757">
    <property type="entry name" value="PRK13261.2-3"/>
    <property type="match status" value="1"/>
</dbReference>
<dbReference type="Pfam" id="PF05194">
    <property type="entry name" value="UreE_C"/>
    <property type="match status" value="1"/>
</dbReference>
<dbReference type="Pfam" id="PF02814">
    <property type="entry name" value="UreE_N"/>
    <property type="match status" value="1"/>
</dbReference>
<dbReference type="PIRSF" id="PIRSF036402">
    <property type="entry name" value="Ureas_acces_UreE"/>
    <property type="match status" value="1"/>
</dbReference>
<dbReference type="SMART" id="SM00988">
    <property type="entry name" value="UreE_N"/>
    <property type="match status" value="1"/>
</dbReference>
<dbReference type="SUPFAM" id="SSF69737">
    <property type="entry name" value="Urease metallochaperone UreE, C-terminal domain"/>
    <property type="match status" value="1"/>
</dbReference>
<dbReference type="SUPFAM" id="SSF69287">
    <property type="entry name" value="Urease metallochaperone UreE, N-terminal domain"/>
    <property type="match status" value="1"/>
</dbReference>
<gene>
    <name evidence="1" type="primary">ureE</name>
    <name type="ordered locus">Arth_0244</name>
</gene>
<keyword id="KW-0143">Chaperone</keyword>
<keyword id="KW-0963">Cytoplasm</keyword>
<keyword id="KW-0533">Nickel</keyword>
<keyword id="KW-0996">Nickel insertion</keyword>
<keyword id="KW-1185">Reference proteome</keyword>
<comment type="function">
    <text evidence="1">Involved in urease metallocenter assembly. Binds nickel. Probably functions as a nickel donor during metallocenter assembly.</text>
</comment>
<comment type="subcellular location">
    <subcellularLocation>
        <location evidence="1">Cytoplasm</location>
    </subcellularLocation>
</comment>
<comment type="similarity">
    <text evidence="1">Belongs to the UreE family.</text>
</comment>
<proteinExistence type="inferred from homology"/>
<reference key="1">
    <citation type="journal article" date="2013" name="Stand. Genomic Sci.">
        <title>Complete genome sequence of Arthrobacter sp. strain FB24.</title>
        <authorList>
            <person name="Nakatsu C.H."/>
            <person name="Barabote R."/>
            <person name="Thompson S."/>
            <person name="Bruce D."/>
            <person name="Detter C."/>
            <person name="Brettin T."/>
            <person name="Han C."/>
            <person name="Beasley F."/>
            <person name="Chen W."/>
            <person name="Konopka A."/>
            <person name="Xie G."/>
        </authorList>
    </citation>
    <scope>NUCLEOTIDE SEQUENCE [LARGE SCALE GENOMIC DNA]</scope>
    <source>
        <strain>FB24</strain>
    </source>
</reference>
<name>UREE_ARTS2</name>
<sequence>MIIEKILGNLHELPASEAGAFAGLHQEKVVLPSAQLVKRIQRVTTDHGKELGIRLPAGSGDLRDGDILHVAETNMIVISVLPTDVLVVAPRSIHEMGVVAHSLGNRHLQAQFFDAGSEYAADVMVCQYDHTVEDYLKHVGVPYERQERVMPVPFRHAEHSH</sequence>
<feature type="chain" id="PRO_1000062541" description="Urease accessory protein UreE">
    <location>
        <begin position="1"/>
        <end position="161"/>
    </location>
</feature>